<feature type="chain" id="PRO_0000357895" description="NADH-quinone oxidoreductase subunit D 2">
    <location>
        <begin position="1"/>
        <end position="404"/>
    </location>
</feature>
<protein>
    <recommendedName>
        <fullName evidence="1">NADH-quinone oxidoreductase subunit D 2</fullName>
        <ecNumber evidence="1">7.1.1.-</ecNumber>
    </recommendedName>
    <alternativeName>
        <fullName evidence="1">NADH dehydrogenase I subunit D 2</fullName>
    </alternativeName>
    <alternativeName>
        <fullName evidence="1">NDH-1 subunit D 2</fullName>
    </alternativeName>
</protein>
<gene>
    <name evidence="1" type="primary">nuoD2</name>
    <name type="ordered locus">RHECIAT_CH0003635</name>
</gene>
<dbReference type="EC" id="7.1.1.-" evidence="1"/>
<dbReference type="EMBL" id="CP001074">
    <property type="protein sequence ID" value="ACE92580.1"/>
    <property type="molecule type" value="Genomic_DNA"/>
</dbReference>
<dbReference type="SMR" id="B3PY59"/>
<dbReference type="KEGG" id="rec:RHECIAT_CH0003635"/>
<dbReference type="eggNOG" id="COG0649">
    <property type="taxonomic scope" value="Bacteria"/>
</dbReference>
<dbReference type="HOGENOM" id="CLU_015134_1_2_5"/>
<dbReference type="Proteomes" id="UP000008817">
    <property type="component" value="Chromosome"/>
</dbReference>
<dbReference type="GO" id="GO:0005886">
    <property type="term" value="C:plasma membrane"/>
    <property type="evidence" value="ECO:0007669"/>
    <property type="project" value="UniProtKB-SubCell"/>
</dbReference>
<dbReference type="GO" id="GO:0051287">
    <property type="term" value="F:NAD binding"/>
    <property type="evidence" value="ECO:0007669"/>
    <property type="project" value="InterPro"/>
</dbReference>
<dbReference type="GO" id="GO:0050136">
    <property type="term" value="F:NADH:ubiquinone reductase (non-electrogenic) activity"/>
    <property type="evidence" value="ECO:0007669"/>
    <property type="project" value="UniProtKB-UniRule"/>
</dbReference>
<dbReference type="GO" id="GO:0048038">
    <property type="term" value="F:quinone binding"/>
    <property type="evidence" value="ECO:0007669"/>
    <property type="project" value="UniProtKB-KW"/>
</dbReference>
<dbReference type="Gene3D" id="1.10.645.10">
    <property type="entry name" value="Cytochrome-c3 Hydrogenase, chain B"/>
    <property type="match status" value="1"/>
</dbReference>
<dbReference type="HAMAP" id="MF_01358">
    <property type="entry name" value="NDH1_NuoD"/>
    <property type="match status" value="1"/>
</dbReference>
<dbReference type="InterPro" id="IPR001135">
    <property type="entry name" value="NADH_Q_OxRdtase_suD"/>
</dbReference>
<dbReference type="InterPro" id="IPR022885">
    <property type="entry name" value="NDH1_su_D/H"/>
</dbReference>
<dbReference type="InterPro" id="IPR029014">
    <property type="entry name" value="NiFe-Hase_large"/>
</dbReference>
<dbReference type="NCBIfam" id="TIGR01962">
    <property type="entry name" value="NuoD"/>
    <property type="match status" value="1"/>
</dbReference>
<dbReference type="NCBIfam" id="NF004739">
    <property type="entry name" value="PRK06075.1"/>
    <property type="match status" value="1"/>
</dbReference>
<dbReference type="PANTHER" id="PTHR11993:SF10">
    <property type="entry name" value="NADH DEHYDROGENASE [UBIQUINONE] IRON-SULFUR PROTEIN 2, MITOCHONDRIAL"/>
    <property type="match status" value="1"/>
</dbReference>
<dbReference type="PANTHER" id="PTHR11993">
    <property type="entry name" value="NADH-UBIQUINONE OXIDOREDUCTASE 49 KDA SUBUNIT"/>
    <property type="match status" value="1"/>
</dbReference>
<dbReference type="Pfam" id="PF00346">
    <property type="entry name" value="Complex1_49kDa"/>
    <property type="match status" value="1"/>
</dbReference>
<dbReference type="SUPFAM" id="SSF56762">
    <property type="entry name" value="HydB/Nqo4-like"/>
    <property type="match status" value="1"/>
</dbReference>
<keyword id="KW-0997">Cell inner membrane</keyword>
<keyword id="KW-1003">Cell membrane</keyword>
<keyword id="KW-0472">Membrane</keyword>
<keyword id="KW-0520">NAD</keyword>
<keyword id="KW-0874">Quinone</keyword>
<keyword id="KW-1278">Translocase</keyword>
<keyword id="KW-0813">Transport</keyword>
<keyword id="KW-0830">Ubiquinone</keyword>
<evidence type="ECO:0000255" key="1">
    <source>
        <dbReference type="HAMAP-Rule" id="MF_01358"/>
    </source>
</evidence>
<sequence>MTEVTELSRPEGEALNTREVLLNLGPQHPSTHGVLRLVLELDGEFVERVDPHIGYLHRGTEKLAESFTYTQIFPLTDRLDYLCPPSNNLAFALAVEKLLGIEAPIRAQYIRVMMAELARISGHLLITGALPMDLGAMTALLYVMREREMIMDLLEMITGARMHTSFCRVGGVREDLPDGFFPKIREFCDIFPNRIRDYERLLEDNRVFLNRTKGIGVISAEDAVDLGLSGPNLRASGVDWDIRRDEPYEIYDRLDFNVITRDEGDCYARWRCRVDEMRESIGIIKQCIDQMPEGPFQIDMPTIAFPLDKDRVHCSMEALIQHFDLSAYGFKVPKGEVYSAIEAPKGELGFYIISDGSPKPFRMKVRAPSFVNLQALFGVTNARYLADMIAVLGSLDPVMAEVDK</sequence>
<name>NUOD2_RHIE6</name>
<organism>
    <name type="scientific">Rhizobium etli (strain CIAT 652)</name>
    <dbReference type="NCBI Taxonomy" id="491916"/>
    <lineage>
        <taxon>Bacteria</taxon>
        <taxon>Pseudomonadati</taxon>
        <taxon>Pseudomonadota</taxon>
        <taxon>Alphaproteobacteria</taxon>
        <taxon>Hyphomicrobiales</taxon>
        <taxon>Rhizobiaceae</taxon>
        <taxon>Rhizobium/Agrobacterium group</taxon>
        <taxon>Rhizobium</taxon>
    </lineage>
</organism>
<reference key="1">
    <citation type="journal article" date="2010" name="Appl. Environ. Microbiol.">
        <title>Conserved symbiotic plasmid DNA sequences in the multireplicon pangenomic structure of Rhizobium etli.</title>
        <authorList>
            <person name="Gonzalez V."/>
            <person name="Acosta J.L."/>
            <person name="Santamaria R.I."/>
            <person name="Bustos P."/>
            <person name="Fernandez J.L."/>
            <person name="Hernandez Gonzalez I.L."/>
            <person name="Diaz R."/>
            <person name="Flores M."/>
            <person name="Palacios R."/>
            <person name="Mora J."/>
            <person name="Davila G."/>
        </authorList>
    </citation>
    <scope>NUCLEOTIDE SEQUENCE [LARGE SCALE GENOMIC DNA]</scope>
    <source>
        <strain>CIAT 652</strain>
    </source>
</reference>
<accession>B3PY59</accession>
<comment type="function">
    <text evidence="1">NDH-1 shuttles electrons from NADH, via FMN and iron-sulfur (Fe-S) centers, to quinones in the respiratory chain. The immediate electron acceptor for the enzyme in this species is believed to be ubiquinone. Couples the redox reaction to proton translocation (for every two electrons transferred, four hydrogen ions are translocated across the cytoplasmic membrane), and thus conserves the redox energy in a proton gradient.</text>
</comment>
<comment type="catalytic activity">
    <reaction evidence="1">
        <text>a quinone + NADH + 5 H(+)(in) = a quinol + NAD(+) + 4 H(+)(out)</text>
        <dbReference type="Rhea" id="RHEA:57888"/>
        <dbReference type="ChEBI" id="CHEBI:15378"/>
        <dbReference type="ChEBI" id="CHEBI:24646"/>
        <dbReference type="ChEBI" id="CHEBI:57540"/>
        <dbReference type="ChEBI" id="CHEBI:57945"/>
        <dbReference type="ChEBI" id="CHEBI:132124"/>
    </reaction>
</comment>
<comment type="subunit">
    <text evidence="1">NDH-1 is composed of 14 different subunits. Subunits NuoB, C, D, E, F, and G constitute the peripheral sector of the complex.</text>
</comment>
<comment type="subcellular location">
    <subcellularLocation>
        <location evidence="1">Cell inner membrane</location>
        <topology evidence="1">Peripheral membrane protein</topology>
        <orientation evidence="1">Cytoplasmic side</orientation>
    </subcellularLocation>
</comment>
<comment type="similarity">
    <text evidence="1">Belongs to the complex I 49 kDa subunit family.</text>
</comment>
<proteinExistence type="inferred from homology"/>